<comment type="function">
    <text evidence="1">Catalyzes the conversion of dethiobiotin (DTB) to biotin by the insertion of a sulfur atom into dethiobiotin via a radical-based mechanism.</text>
</comment>
<comment type="catalytic activity">
    <reaction evidence="1">
        <text>(4R,5S)-dethiobiotin + (sulfur carrier)-SH + 2 reduced [2Fe-2S]-[ferredoxin] + 2 S-adenosyl-L-methionine = (sulfur carrier)-H + biotin + 2 5'-deoxyadenosine + 2 L-methionine + 2 oxidized [2Fe-2S]-[ferredoxin]</text>
        <dbReference type="Rhea" id="RHEA:22060"/>
        <dbReference type="Rhea" id="RHEA-COMP:10000"/>
        <dbReference type="Rhea" id="RHEA-COMP:10001"/>
        <dbReference type="Rhea" id="RHEA-COMP:14737"/>
        <dbReference type="Rhea" id="RHEA-COMP:14739"/>
        <dbReference type="ChEBI" id="CHEBI:17319"/>
        <dbReference type="ChEBI" id="CHEBI:29917"/>
        <dbReference type="ChEBI" id="CHEBI:33737"/>
        <dbReference type="ChEBI" id="CHEBI:33738"/>
        <dbReference type="ChEBI" id="CHEBI:57586"/>
        <dbReference type="ChEBI" id="CHEBI:57844"/>
        <dbReference type="ChEBI" id="CHEBI:59789"/>
        <dbReference type="ChEBI" id="CHEBI:64428"/>
        <dbReference type="ChEBI" id="CHEBI:149473"/>
        <dbReference type="EC" id="2.8.1.6"/>
    </reaction>
</comment>
<comment type="cofactor">
    <cofactor evidence="1">
        <name>[4Fe-4S] cluster</name>
        <dbReference type="ChEBI" id="CHEBI:49883"/>
    </cofactor>
    <text evidence="1">Binds 1 [4Fe-4S] cluster. The cluster is coordinated with 3 cysteines and an exchangeable S-adenosyl-L-methionine.</text>
</comment>
<comment type="cofactor">
    <cofactor evidence="1">
        <name>[2Fe-2S] cluster</name>
        <dbReference type="ChEBI" id="CHEBI:190135"/>
    </cofactor>
    <text evidence="1">Binds 1 [2Fe-2S] cluster. The cluster is coordinated with 3 cysteines and 1 arginine.</text>
</comment>
<comment type="pathway">
    <text evidence="1">Cofactor biosynthesis; biotin biosynthesis; biotin from 7,8-diaminononanoate: step 2/2.</text>
</comment>
<comment type="subunit">
    <text evidence="1">Homodimer.</text>
</comment>
<comment type="similarity">
    <text evidence="1">Belongs to the radical SAM superfamily. Biotin synthase family.</text>
</comment>
<comment type="sequence caution" evidence="3">
    <conflict type="erroneous initiation">
        <sequence resource="EMBL-CDS" id="AAL54017"/>
    </conflict>
</comment>
<accession>Q8YBW1</accession>
<sequence length="328" mass="35653">MPDRGGENGASCSVGRWSAEEARAIYNLPFNDLLFRAHGLHRENFDPNRIQLSKLLNIKTGGCPEDCGYCSQSASAENGLKASKLMEIETVLEEARKAKAAGATRYCMGAAWRSPKDRDMPALTHMIESVKAMGLETCMTLGMLDSDKAEKLADAGLDYYNHNIDTSERFYPAVITTRSFEDRLDTLANVRNAGIKVCSGGILGLGEEAEDRIDMLVTLANLPEPPESVPINMLIPMPGTRLAKAAPVDPLEFVRVVALARILMPKSHVRLTAGRTAMSDEMQALCFFAGANSLFMGDTLLTAANPGDDRDSSLLRRLGIQAETEQPA</sequence>
<name>BIOB_BRUME</name>
<keyword id="KW-0001">2Fe-2S</keyword>
<keyword id="KW-0004">4Fe-4S</keyword>
<keyword id="KW-0093">Biotin biosynthesis</keyword>
<keyword id="KW-0408">Iron</keyword>
<keyword id="KW-0411">Iron-sulfur</keyword>
<keyword id="KW-0479">Metal-binding</keyword>
<keyword id="KW-0949">S-adenosyl-L-methionine</keyword>
<keyword id="KW-0808">Transferase</keyword>
<protein>
    <recommendedName>
        <fullName evidence="1">Biotin synthase</fullName>
        <ecNumber evidence="1">2.8.1.6</ecNumber>
    </recommendedName>
</protein>
<organism>
    <name type="scientific">Brucella melitensis biotype 1 (strain ATCC 23456 / CCUG 17765 / NCTC 10094 / 16M)</name>
    <dbReference type="NCBI Taxonomy" id="224914"/>
    <lineage>
        <taxon>Bacteria</taxon>
        <taxon>Pseudomonadati</taxon>
        <taxon>Pseudomonadota</taxon>
        <taxon>Alphaproteobacteria</taxon>
        <taxon>Hyphomicrobiales</taxon>
        <taxon>Brucellaceae</taxon>
        <taxon>Brucella/Ochrobactrum group</taxon>
        <taxon>Brucella</taxon>
    </lineage>
</organism>
<feature type="chain" id="PRO_0000381252" description="Biotin synthase">
    <location>
        <begin position="1"/>
        <end position="328"/>
    </location>
</feature>
<feature type="domain" description="Radical SAM core" evidence="2">
    <location>
        <begin position="48"/>
        <end position="275"/>
    </location>
</feature>
<feature type="binding site" evidence="1">
    <location>
        <position position="63"/>
    </location>
    <ligand>
        <name>[4Fe-4S] cluster</name>
        <dbReference type="ChEBI" id="CHEBI:49883"/>
        <note>4Fe-4S-S-AdoMet</note>
    </ligand>
</feature>
<feature type="binding site" evidence="1">
    <location>
        <position position="67"/>
    </location>
    <ligand>
        <name>[4Fe-4S] cluster</name>
        <dbReference type="ChEBI" id="CHEBI:49883"/>
        <note>4Fe-4S-S-AdoMet</note>
    </ligand>
</feature>
<feature type="binding site" evidence="1">
    <location>
        <position position="70"/>
    </location>
    <ligand>
        <name>[4Fe-4S] cluster</name>
        <dbReference type="ChEBI" id="CHEBI:49883"/>
        <note>4Fe-4S-S-AdoMet</note>
    </ligand>
</feature>
<feature type="binding site" evidence="1">
    <location>
        <position position="107"/>
    </location>
    <ligand>
        <name>[2Fe-2S] cluster</name>
        <dbReference type="ChEBI" id="CHEBI:190135"/>
    </ligand>
</feature>
<feature type="binding site" evidence="1">
    <location>
        <position position="138"/>
    </location>
    <ligand>
        <name>[2Fe-2S] cluster</name>
        <dbReference type="ChEBI" id="CHEBI:190135"/>
    </ligand>
</feature>
<feature type="binding site" evidence="1">
    <location>
        <position position="198"/>
    </location>
    <ligand>
        <name>[2Fe-2S] cluster</name>
        <dbReference type="ChEBI" id="CHEBI:190135"/>
    </ligand>
</feature>
<feature type="binding site" evidence="1">
    <location>
        <position position="270"/>
    </location>
    <ligand>
        <name>[2Fe-2S] cluster</name>
        <dbReference type="ChEBI" id="CHEBI:190135"/>
    </ligand>
</feature>
<evidence type="ECO:0000255" key="1">
    <source>
        <dbReference type="HAMAP-Rule" id="MF_01694"/>
    </source>
</evidence>
<evidence type="ECO:0000255" key="2">
    <source>
        <dbReference type="PROSITE-ProRule" id="PRU01266"/>
    </source>
</evidence>
<evidence type="ECO:0000305" key="3"/>
<dbReference type="EC" id="2.8.1.6" evidence="1"/>
<dbReference type="EMBL" id="AE008918">
    <property type="protein sequence ID" value="AAL54017.1"/>
    <property type="status" value="ALT_INIT"/>
    <property type="molecule type" value="Genomic_DNA"/>
</dbReference>
<dbReference type="PIR" id="AF3606">
    <property type="entry name" value="AF3606"/>
</dbReference>
<dbReference type="SMR" id="Q8YBW1"/>
<dbReference type="KEGG" id="bme:BMEII0775"/>
<dbReference type="eggNOG" id="COG0502">
    <property type="taxonomic scope" value="Bacteria"/>
</dbReference>
<dbReference type="UniPathway" id="UPA00078">
    <property type="reaction ID" value="UER00162"/>
</dbReference>
<dbReference type="Proteomes" id="UP000000419">
    <property type="component" value="Chromosome II"/>
</dbReference>
<dbReference type="GO" id="GO:0051537">
    <property type="term" value="F:2 iron, 2 sulfur cluster binding"/>
    <property type="evidence" value="ECO:0007669"/>
    <property type="project" value="UniProtKB-KW"/>
</dbReference>
<dbReference type="GO" id="GO:0051539">
    <property type="term" value="F:4 iron, 4 sulfur cluster binding"/>
    <property type="evidence" value="ECO:0007669"/>
    <property type="project" value="UniProtKB-KW"/>
</dbReference>
<dbReference type="GO" id="GO:0004076">
    <property type="term" value="F:biotin synthase activity"/>
    <property type="evidence" value="ECO:0007669"/>
    <property type="project" value="UniProtKB-UniRule"/>
</dbReference>
<dbReference type="GO" id="GO:0005506">
    <property type="term" value="F:iron ion binding"/>
    <property type="evidence" value="ECO:0007669"/>
    <property type="project" value="UniProtKB-UniRule"/>
</dbReference>
<dbReference type="GO" id="GO:0009102">
    <property type="term" value="P:biotin biosynthetic process"/>
    <property type="evidence" value="ECO:0007669"/>
    <property type="project" value="UniProtKB-UniRule"/>
</dbReference>
<dbReference type="CDD" id="cd01335">
    <property type="entry name" value="Radical_SAM"/>
    <property type="match status" value="1"/>
</dbReference>
<dbReference type="Gene3D" id="3.20.20.70">
    <property type="entry name" value="Aldolase class I"/>
    <property type="match status" value="1"/>
</dbReference>
<dbReference type="HAMAP" id="MF_01694">
    <property type="entry name" value="BioB"/>
    <property type="match status" value="1"/>
</dbReference>
<dbReference type="InterPro" id="IPR013785">
    <property type="entry name" value="Aldolase_TIM"/>
</dbReference>
<dbReference type="InterPro" id="IPR010722">
    <property type="entry name" value="BATS_dom"/>
</dbReference>
<dbReference type="InterPro" id="IPR002684">
    <property type="entry name" value="Biotin_synth/BioAB"/>
</dbReference>
<dbReference type="InterPro" id="IPR024177">
    <property type="entry name" value="Biotin_synthase"/>
</dbReference>
<dbReference type="InterPro" id="IPR006638">
    <property type="entry name" value="Elp3/MiaA/NifB-like_rSAM"/>
</dbReference>
<dbReference type="InterPro" id="IPR007197">
    <property type="entry name" value="rSAM"/>
</dbReference>
<dbReference type="NCBIfam" id="TIGR00433">
    <property type="entry name" value="bioB"/>
    <property type="match status" value="1"/>
</dbReference>
<dbReference type="PANTHER" id="PTHR22976">
    <property type="entry name" value="BIOTIN SYNTHASE"/>
    <property type="match status" value="1"/>
</dbReference>
<dbReference type="PANTHER" id="PTHR22976:SF2">
    <property type="entry name" value="BIOTIN SYNTHASE, MITOCHONDRIAL"/>
    <property type="match status" value="1"/>
</dbReference>
<dbReference type="Pfam" id="PF06968">
    <property type="entry name" value="BATS"/>
    <property type="match status" value="1"/>
</dbReference>
<dbReference type="Pfam" id="PF04055">
    <property type="entry name" value="Radical_SAM"/>
    <property type="match status" value="1"/>
</dbReference>
<dbReference type="PIRSF" id="PIRSF001619">
    <property type="entry name" value="Biotin_synth"/>
    <property type="match status" value="1"/>
</dbReference>
<dbReference type="SFLD" id="SFLDF00272">
    <property type="entry name" value="biotin_synthase"/>
    <property type="match status" value="1"/>
</dbReference>
<dbReference type="SFLD" id="SFLDS00029">
    <property type="entry name" value="Radical_SAM"/>
    <property type="match status" value="1"/>
</dbReference>
<dbReference type="SMART" id="SM00876">
    <property type="entry name" value="BATS"/>
    <property type="match status" value="1"/>
</dbReference>
<dbReference type="SMART" id="SM00729">
    <property type="entry name" value="Elp3"/>
    <property type="match status" value="1"/>
</dbReference>
<dbReference type="SUPFAM" id="SSF102114">
    <property type="entry name" value="Radical SAM enzymes"/>
    <property type="match status" value="1"/>
</dbReference>
<dbReference type="PROSITE" id="PS51918">
    <property type="entry name" value="RADICAL_SAM"/>
    <property type="match status" value="1"/>
</dbReference>
<reference key="1">
    <citation type="journal article" date="2002" name="Proc. Natl. Acad. Sci. U.S.A.">
        <title>The genome sequence of the facultative intracellular pathogen Brucella melitensis.</title>
        <authorList>
            <person name="DelVecchio V.G."/>
            <person name="Kapatral V."/>
            <person name="Redkar R.J."/>
            <person name="Patra G."/>
            <person name="Mujer C."/>
            <person name="Los T."/>
            <person name="Ivanova N."/>
            <person name="Anderson I."/>
            <person name="Bhattacharyya A."/>
            <person name="Lykidis A."/>
            <person name="Reznik G."/>
            <person name="Jablonski L."/>
            <person name="Larsen N."/>
            <person name="D'Souza M."/>
            <person name="Bernal A."/>
            <person name="Mazur M."/>
            <person name="Goltsman E."/>
            <person name="Selkov E."/>
            <person name="Elzer P.H."/>
            <person name="Hagius S."/>
            <person name="O'Callaghan D."/>
            <person name="Letesson J.-J."/>
            <person name="Haselkorn R."/>
            <person name="Kyrpides N.C."/>
            <person name="Overbeek R."/>
        </authorList>
    </citation>
    <scope>NUCLEOTIDE SEQUENCE [LARGE SCALE GENOMIC DNA]</scope>
    <source>
        <strain>ATCC 23456 / CCUG 17765 / NCTC 10094 / 16M</strain>
    </source>
</reference>
<proteinExistence type="inferred from homology"/>
<gene>
    <name evidence="1" type="primary">bioB</name>
    <name type="ordered locus">BMEII0775</name>
</gene>